<proteinExistence type="inferred from homology"/>
<accession>C5D4Z0</accession>
<sequence length="95" mass="11117">MEHGDRHITVVDENGNEQLCEILFTFESEDFGKSYVFYYPVGAEFEDEEETEIHVSAFIPGEGEQEGELLPIESEEEWEMIEEVWNTFCAEQDEE</sequence>
<protein>
    <recommendedName>
        <fullName evidence="1">UPF0473 protein GWCH70_2487</fullName>
    </recommendedName>
</protein>
<evidence type="ECO:0000255" key="1">
    <source>
        <dbReference type="HAMAP-Rule" id="MF_01448"/>
    </source>
</evidence>
<gene>
    <name type="ordered locus">GWCH70_2487</name>
</gene>
<organism>
    <name type="scientific">Geobacillus sp. (strain WCH70)</name>
    <dbReference type="NCBI Taxonomy" id="471223"/>
    <lineage>
        <taxon>Bacteria</taxon>
        <taxon>Bacillati</taxon>
        <taxon>Bacillota</taxon>
        <taxon>Bacilli</taxon>
        <taxon>Bacillales</taxon>
        <taxon>Anoxybacillaceae</taxon>
        <taxon>Geobacillus</taxon>
    </lineage>
</organism>
<dbReference type="EMBL" id="CP001638">
    <property type="protein sequence ID" value="ACS25182.1"/>
    <property type="molecule type" value="Genomic_DNA"/>
</dbReference>
<dbReference type="STRING" id="471223.GWCH70_2487"/>
<dbReference type="KEGG" id="gwc:GWCH70_2487"/>
<dbReference type="eggNOG" id="COG3906">
    <property type="taxonomic scope" value="Bacteria"/>
</dbReference>
<dbReference type="HOGENOM" id="CLU_146610_2_1_9"/>
<dbReference type="OrthoDB" id="2086132at2"/>
<dbReference type="HAMAP" id="MF_01448">
    <property type="entry name" value="UPF0473"/>
    <property type="match status" value="1"/>
</dbReference>
<dbReference type="InterPro" id="IPR009711">
    <property type="entry name" value="UPF0473"/>
</dbReference>
<dbReference type="NCBIfam" id="NF010217">
    <property type="entry name" value="PRK13678.1-4"/>
    <property type="match status" value="1"/>
</dbReference>
<dbReference type="NCBIfam" id="NF010221">
    <property type="entry name" value="PRK13678.2-4"/>
    <property type="match status" value="1"/>
</dbReference>
<dbReference type="PANTHER" id="PTHR40066">
    <property type="entry name" value="UPF0473 PROTEIN CBO2561/CLC_2432"/>
    <property type="match status" value="1"/>
</dbReference>
<dbReference type="PANTHER" id="PTHR40066:SF1">
    <property type="entry name" value="UPF0473 PROTEIN CBO2561_CLC_2432"/>
    <property type="match status" value="1"/>
</dbReference>
<dbReference type="Pfam" id="PF06949">
    <property type="entry name" value="DUF1292"/>
    <property type="match status" value="1"/>
</dbReference>
<reference key="1">
    <citation type="submission" date="2009-06" db="EMBL/GenBank/DDBJ databases">
        <title>Complete sequence of chromosome of Geopacillus sp. WCH70.</title>
        <authorList>
            <consortium name="US DOE Joint Genome Institute"/>
            <person name="Lucas S."/>
            <person name="Copeland A."/>
            <person name="Lapidus A."/>
            <person name="Glavina del Rio T."/>
            <person name="Dalin E."/>
            <person name="Tice H."/>
            <person name="Bruce D."/>
            <person name="Goodwin L."/>
            <person name="Pitluck S."/>
            <person name="Chertkov O."/>
            <person name="Brettin T."/>
            <person name="Detter J.C."/>
            <person name="Han C."/>
            <person name="Larimer F."/>
            <person name="Land M."/>
            <person name="Hauser L."/>
            <person name="Kyrpides N."/>
            <person name="Mikhailova N."/>
            <person name="Brumm P."/>
            <person name="Mead D.A."/>
            <person name="Richardson P."/>
        </authorList>
    </citation>
    <scope>NUCLEOTIDE SEQUENCE [LARGE SCALE GENOMIC DNA]</scope>
    <source>
        <strain>WCH70</strain>
    </source>
</reference>
<comment type="similarity">
    <text evidence="1">Belongs to the UPF0473 family.</text>
</comment>
<name>Y2487_GEOSW</name>
<feature type="chain" id="PRO_1000215322" description="UPF0473 protein GWCH70_2487">
    <location>
        <begin position="1"/>
        <end position="95"/>
    </location>
</feature>